<comment type="function">
    <text evidence="1">Catalyzes the isomerization between 2-isopropylmalate and 3-isopropylmalate, via the formation of 2-isopropylmaleate.</text>
</comment>
<comment type="catalytic activity">
    <reaction evidence="1">
        <text>(2R,3S)-3-isopropylmalate = (2S)-2-isopropylmalate</text>
        <dbReference type="Rhea" id="RHEA:32287"/>
        <dbReference type="ChEBI" id="CHEBI:1178"/>
        <dbReference type="ChEBI" id="CHEBI:35121"/>
        <dbReference type="EC" id="4.2.1.33"/>
    </reaction>
</comment>
<comment type="pathway">
    <text evidence="1">Amino-acid biosynthesis; L-leucine biosynthesis; L-leucine from 3-methyl-2-oxobutanoate: step 2/4.</text>
</comment>
<comment type="subunit">
    <text evidence="1">Heterodimer of LeuC and LeuD.</text>
</comment>
<comment type="similarity">
    <text evidence="1">Belongs to the LeuD family. LeuD type 1 subfamily.</text>
</comment>
<gene>
    <name evidence="1" type="primary">leuD</name>
    <name type="ordered locus">Cj1716c</name>
</gene>
<organism>
    <name type="scientific">Campylobacter jejuni subsp. jejuni serotype O:2 (strain ATCC 700819 / NCTC 11168)</name>
    <dbReference type="NCBI Taxonomy" id="192222"/>
    <lineage>
        <taxon>Bacteria</taxon>
        <taxon>Pseudomonadati</taxon>
        <taxon>Campylobacterota</taxon>
        <taxon>Epsilonproteobacteria</taxon>
        <taxon>Campylobacterales</taxon>
        <taxon>Campylobacteraceae</taxon>
        <taxon>Campylobacter</taxon>
    </lineage>
</organism>
<accession>Q9PLW2</accession>
<accession>Q0P7R5</accession>
<sequence length="200" mass="22899">MQKFIIHKGIACPLEYANIDTDQIIPKQFLLAVSKQGFGKHLFHDLRYLDDKESVLNMDFNLNKKEYQNSSILVSFENFGSGSSREHAPWALVDYGIRAIIAPSFADIFKNNALGNGLLTIELAKDEVLEIVDELKKSQDKNIEISLLEKRVFFKDKIFSFDLDDFHRICLLEGLDNIALTLKHEAQIKAYEKNSKSFLV</sequence>
<feature type="chain" id="PRO_0000141807" description="3-isopropylmalate dehydratase small subunit">
    <location>
        <begin position="1"/>
        <end position="200"/>
    </location>
</feature>
<evidence type="ECO:0000255" key="1">
    <source>
        <dbReference type="HAMAP-Rule" id="MF_01031"/>
    </source>
</evidence>
<dbReference type="EC" id="4.2.1.33" evidence="1"/>
<dbReference type="EMBL" id="AL111168">
    <property type="protein sequence ID" value="CAL35810.1"/>
    <property type="molecule type" value="Genomic_DNA"/>
</dbReference>
<dbReference type="PIR" id="H81269">
    <property type="entry name" value="H81269"/>
</dbReference>
<dbReference type="RefSeq" id="WP_002853150.1">
    <property type="nucleotide sequence ID" value="NZ_SZUC01000002.1"/>
</dbReference>
<dbReference type="RefSeq" id="YP_002345082.1">
    <property type="nucleotide sequence ID" value="NC_002163.1"/>
</dbReference>
<dbReference type="SMR" id="Q9PLW2"/>
<dbReference type="IntAct" id="Q9PLW2">
    <property type="interactions" value="8"/>
</dbReference>
<dbReference type="STRING" id="192222.Cj1716c"/>
<dbReference type="PaxDb" id="192222-Cj1716c"/>
<dbReference type="EnsemblBacteria" id="CAL35810">
    <property type="protein sequence ID" value="CAL35810"/>
    <property type="gene ID" value="Cj1716c"/>
</dbReference>
<dbReference type="GeneID" id="905993"/>
<dbReference type="KEGG" id="cje:Cj1716c"/>
<dbReference type="PATRIC" id="fig|192222.6.peg.1690"/>
<dbReference type="eggNOG" id="COG0066">
    <property type="taxonomic scope" value="Bacteria"/>
</dbReference>
<dbReference type="HOGENOM" id="CLU_081378_0_3_7"/>
<dbReference type="OrthoDB" id="9777465at2"/>
<dbReference type="UniPathway" id="UPA00048">
    <property type="reaction ID" value="UER00071"/>
</dbReference>
<dbReference type="Proteomes" id="UP000000799">
    <property type="component" value="Chromosome"/>
</dbReference>
<dbReference type="GO" id="GO:0009316">
    <property type="term" value="C:3-isopropylmalate dehydratase complex"/>
    <property type="evidence" value="ECO:0007669"/>
    <property type="project" value="InterPro"/>
</dbReference>
<dbReference type="GO" id="GO:0003861">
    <property type="term" value="F:3-isopropylmalate dehydratase activity"/>
    <property type="evidence" value="ECO:0007669"/>
    <property type="project" value="UniProtKB-UniRule"/>
</dbReference>
<dbReference type="GO" id="GO:0009098">
    <property type="term" value="P:L-leucine biosynthetic process"/>
    <property type="evidence" value="ECO:0007669"/>
    <property type="project" value="UniProtKB-UniRule"/>
</dbReference>
<dbReference type="CDD" id="cd01577">
    <property type="entry name" value="IPMI_Swivel"/>
    <property type="match status" value="1"/>
</dbReference>
<dbReference type="FunFam" id="3.20.19.10:FF:000003">
    <property type="entry name" value="3-isopropylmalate dehydratase small subunit"/>
    <property type="match status" value="1"/>
</dbReference>
<dbReference type="Gene3D" id="3.20.19.10">
    <property type="entry name" value="Aconitase, domain 4"/>
    <property type="match status" value="1"/>
</dbReference>
<dbReference type="HAMAP" id="MF_01031">
    <property type="entry name" value="LeuD_type1"/>
    <property type="match status" value="1"/>
</dbReference>
<dbReference type="InterPro" id="IPR004431">
    <property type="entry name" value="3-IsopropMal_deHydase_ssu"/>
</dbReference>
<dbReference type="InterPro" id="IPR015928">
    <property type="entry name" value="Aconitase/3IPM_dehydase_swvl"/>
</dbReference>
<dbReference type="InterPro" id="IPR000573">
    <property type="entry name" value="AconitaseA/IPMdHydase_ssu_swvl"/>
</dbReference>
<dbReference type="InterPro" id="IPR033940">
    <property type="entry name" value="IPMI_Swivel"/>
</dbReference>
<dbReference type="InterPro" id="IPR050075">
    <property type="entry name" value="LeuD"/>
</dbReference>
<dbReference type="NCBIfam" id="TIGR00171">
    <property type="entry name" value="leuD"/>
    <property type="match status" value="1"/>
</dbReference>
<dbReference type="NCBIfam" id="NF002458">
    <property type="entry name" value="PRK01641.1"/>
    <property type="match status" value="1"/>
</dbReference>
<dbReference type="PANTHER" id="PTHR43345:SF5">
    <property type="entry name" value="3-ISOPROPYLMALATE DEHYDRATASE SMALL SUBUNIT"/>
    <property type="match status" value="1"/>
</dbReference>
<dbReference type="PANTHER" id="PTHR43345">
    <property type="entry name" value="3-ISOPROPYLMALATE DEHYDRATASE SMALL SUBUNIT 2-RELATED-RELATED"/>
    <property type="match status" value="1"/>
</dbReference>
<dbReference type="Pfam" id="PF00694">
    <property type="entry name" value="Aconitase_C"/>
    <property type="match status" value="1"/>
</dbReference>
<dbReference type="SUPFAM" id="SSF52016">
    <property type="entry name" value="LeuD/IlvD-like"/>
    <property type="match status" value="1"/>
</dbReference>
<proteinExistence type="inferred from homology"/>
<protein>
    <recommendedName>
        <fullName evidence="1">3-isopropylmalate dehydratase small subunit</fullName>
        <ecNumber evidence="1">4.2.1.33</ecNumber>
    </recommendedName>
    <alternativeName>
        <fullName evidence="1">Alpha-IPM isomerase</fullName>
        <shortName evidence="1">IPMI</shortName>
    </alternativeName>
    <alternativeName>
        <fullName evidence="1">Isopropylmalate isomerase</fullName>
    </alternativeName>
</protein>
<name>LEUD_CAMJE</name>
<reference key="1">
    <citation type="journal article" date="2000" name="Nature">
        <title>The genome sequence of the food-borne pathogen Campylobacter jejuni reveals hypervariable sequences.</title>
        <authorList>
            <person name="Parkhill J."/>
            <person name="Wren B.W."/>
            <person name="Mungall K.L."/>
            <person name="Ketley J.M."/>
            <person name="Churcher C.M."/>
            <person name="Basham D."/>
            <person name="Chillingworth T."/>
            <person name="Davies R.M."/>
            <person name="Feltwell T."/>
            <person name="Holroyd S."/>
            <person name="Jagels K."/>
            <person name="Karlyshev A.V."/>
            <person name="Moule S."/>
            <person name="Pallen M.J."/>
            <person name="Penn C.W."/>
            <person name="Quail M.A."/>
            <person name="Rajandream M.A."/>
            <person name="Rutherford K.M."/>
            <person name="van Vliet A.H.M."/>
            <person name="Whitehead S."/>
            <person name="Barrell B.G."/>
        </authorList>
    </citation>
    <scope>NUCLEOTIDE SEQUENCE [LARGE SCALE GENOMIC DNA]</scope>
    <source>
        <strain>ATCC 700819 / NCTC 11168</strain>
    </source>
</reference>
<keyword id="KW-0028">Amino-acid biosynthesis</keyword>
<keyword id="KW-0100">Branched-chain amino acid biosynthesis</keyword>
<keyword id="KW-0432">Leucine biosynthesis</keyword>
<keyword id="KW-0456">Lyase</keyword>
<keyword id="KW-1185">Reference proteome</keyword>